<comment type="cofactor">
    <cofactor evidence="1">
        <name>Zn(2+)</name>
        <dbReference type="ChEBI" id="CHEBI:29105"/>
    </cofactor>
    <text evidence="1">Binds 2 Zn(2+) ions per subunit.</text>
</comment>
<comment type="similarity">
    <text evidence="3">Belongs to the metallo-beta-lactamase superfamily.</text>
</comment>
<keyword id="KW-0378">Hydrolase</keyword>
<keyword id="KW-0479">Metal-binding</keyword>
<keyword id="KW-1185">Reference proteome</keyword>
<keyword id="KW-0862">Zinc</keyword>
<evidence type="ECO:0000250" key="1"/>
<evidence type="ECO:0000256" key="2">
    <source>
        <dbReference type="SAM" id="MobiDB-lite"/>
    </source>
</evidence>
<evidence type="ECO:0000305" key="3"/>
<feature type="chain" id="PRO_0000104009" description="Probable metallo-hydrolase Rv2300c">
    <location>
        <begin position="1"/>
        <end position="310"/>
    </location>
</feature>
<feature type="region of interest" description="Disordered" evidence="2">
    <location>
        <begin position="1"/>
        <end position="29"/>
    </location>
</feature>
<feature type="binding site" evidence="1">
    <location>
        <position position="137"/>
    </location>
    <ligand>
        <name>Zn(2+)</name>
        <dbReference type="ChEBI" id="CHEBI:29105"/>
        <label>1</label>
    </ligand>
</feature>
<feature type="binding site" evidence="1">
    <location>
        <position position="139"/>
    </location>
    <ligand>
        <name>Zn(2+)</name>
        <dbReference type="ChEBI" id="CHEBI:29105"/>
        <label>1</label>
    </ligand>
</feature>
<feature type="binding site" evidence="1">
    <location>
        <position position="141"/>
    </location>
    <ligand>
        <name>Zn(2+)</name>
        <dbReference type="ChEBI" id="CHEBI:29105"/>
        <label>2</label>
    </ligand>
</feature>
<feature type="binding site" evidence="1">
    <location>
        <position position="142"/>
    </location>
    <ligand>
        <name>Zn(2+)</name>
        <dbReference type="ChEBI" id="CHEBI:29105"/>
        <label>2</label>
    </ligand>
</feature>
<feature type="binding site" evidence="1">
    <location>
        <position position="221"/>
    </location>
    <ligand>
        <name>Zn(2+)</name>
        <dbReference type="ChEBI" id="CHEBI:29105"/>
        <label>1</label>
    </ligand>
</feature>
<feature type="binding site" evidence="1">
    <location>
        <position position="242"/>
    </location>
    <ligand>
        <name>Zn(2+)</name>
        <dbReference type="ChEBI" id="CHEBI:29105"/>
        <label>1</label>
    </ligand>
</feature>
<feature type="binding site" evidence="1">
    <location>
        <position position="242"/>
    </location>
    <ligand>
        <name>Zn(2+)</name>
        <dbReference type="ChEBI" id="CHEBI:29105"/>
        <label>2</label>
    </ligand>
</feature>
<feature type="binding site" evidence="1">
    <location>
        <position position="288"/>
    </location>
    <ligand>
        <name>Zn(2+)</name>
        <dbReference type="ChEBI" id="CHEBI:29105"/>
        <label>2</label>
    </ligand>
</feature>
<name>Y2300_MYCTU</name>
<reference key="1">
    <citation type="journal article" date="1998" name="Nature">
        <title>Deciphering the biology of Mycobacterium tuberculosis from the complete genome sequence.</title>
        <authorList>
            <person name="Cole S.T."/>
            <person name="Brosch R."/>
            <person name="Parkhill J."/>
            <person name="Garnier T."/>
            <person name="Churcher C.M."/>
            <person name="Harris D.E."/>
            <person name="Gordon S.V."/>
            <person name="Eiglmeier K."/>
            <person name="Gas S."/>
            <person name="Barry C.E. III"/>
            <person name="Tekaia F."/>
            <person name="Badcock K."/>
            <person name="Basham D."/>
            <person name="Brown D."/>
            <person name="Chillingworth T."/>
            <person name="Connor R."/>
            <person name="Davies R.M."/>
            <person name="Devlin K."/>
            <person name="Feltwell T."/>
            <person name="Gentles S."/>
            <person name="Hamlin N."/>
            <person name="Holroyd S."/>
            <person name="Hornsby T."/>
            <person name="Jagels K."/>
            <person name="Krogh A."/>
            <person name="McLean J."/>
            <person name="Moule S."/>
            <person name="Murphy L.D."/>
            <person name="Oliver S."/>
            <person name="Osborne J."/>
            <person name="Quail M.A."/>
            <person name="Rajandream M.A."/>
            <person name="Rogers J."/>
            <person name="Rutter S."/>
            <person name="Seeger K."/>
            <person name="Skelton S."/>
            <person name="Squares S."/>
            <person name="Squares R."/>
            <person name="Sulston J.E."/>
            <person name="Taylor K."/>
            <person name="Whitehead S."/>
            <person name="Barrell B.G."/>
        </authorList>
    </citation>
    <scope>NUCLEOTIDE SEQUENCE [LARGE SCALE GENOMIC DNA]</scope>
    <source>
        <strain>ATCC 25618 / H37Rv</strain>
    </source>
</reference>
<reference key="2">
    <citation type="journal article" date="2011" name="Mol. Cell. Proteomics">
        <title>Proteogenomic analysis of Mycobacterium tuberculosis by high resolution mass spectrometry.</title>
        <authorList>
            <person name="Kelkar D.S."/>
            <person name="Kumar D."/>
            <person name="Kumar P."/>
            <person name="Balakrishnan L."/>
            <person name="Muthusamy B."/>
            <person name="Yadav A.K."/>
            <person name="Shrivastava P."/>
            <person name="Marimuthu A."/>
            <person name="Anand S."/>
            <person name="Sundaram H."/>
            <person name="Kingsbury R."/>
            <person name="Harsha H.C."/>
            <person name="Nair B."/>
            <person name="Prasad T.S."/>
            <person name="Chauhan D.S."/>
            <person name="Katoch K."/>
            <person name="Katoch V.M."/>
            <person name="Kumar P."/>
            <person name="Chaerkady R."/>
            <person name="Ramachandran S."/>
            <person name="Dash D."/>
            <person name="Pandey A."/>
        </authorList>
    </citation>
    <scope>IDENTIFICATION BY MASS SPECTROMETRY [LARGE SCALE ANALYSIS]</scope>
    <source>
        <strain>ATCC 25618 / H37Rv</strain>
    </source>
</reference>
<organism>
    <name type="scientific">Mycobacterium tuberculosis (strain ATCC 25618 / H37Rv)</name>
    <dbReference type="NCBI Taxonomy" id="83332"/>
    <lineage>
        <taxon>Bacteria</taxon>
        <taxon>Bacillati</taxon>
        <taxon>Actinomycetota</taxon>
        <taxon>Actinomycetes</taxon>
        <taxon>Mycobacteriales</taxon>
        <taxon>Mycobacteriaceae</taxon>
        <taxon>Mycobacterium</taxon>
        <taxon>Mycobacterium tuberculosis complex</taxon>
    </lineage>
</organism>
<sequence length="310" mass="34352">MVATRGRPCPTNFSRPQRPRVAGNGTKSQRCRGRLTTSMLGVAPEAKGPPVKVHHLNCGTMNAFGIALLCHVLLVETDDGLVLVDTGFGIQDCLDPGRVGLFRHVLRPAFLQAETAARQIEQLGYRTSDVRHIVLTHFDFDHIGGIADFPEAHLHVTAAEARGAIHAPSLRERLRYRRGQWAHGPKLVEHGPDGEPWRGFASAKPLDSIGTGVVLVPMPGHTRGHAAVAVDAGHRWVLHCGDAFYHRGTLDGRFRVPFVMRAEEKLLSYNRNQLRDNQARIVELHRRHDPDLLIVCAHDPDLYQLARDTA</sequence>
<dbReference type="EC" id="3.-.-.-"/>
<dbReference type="EMBL" id="AL123456">
    <property type="protein sequence ID" value="CCP45082.1"/>
    <property type="molecule type" value="Genomic_DNA"/>
</dbReference>
<dbReference type="PIR" id="H70733">
    <property type="entry name" value="H70733"/>
</dbReference>
<dbReference type="RefSeq" id="NP_216816.1">
    <property type="nucleotide sequence ID" value="NC_000962.3"/>
</dbReference>
<dbReference type="RefSeq" id="WP_003899260.1">
    <property type="nucleotide sequence ID" value="NC_000962.3"/>
</dbReference>
<dbReference type="SMR" id="P9WLD7"/>
<dbReference type="STRING" id="83332.Rv2300c"/>
<dbReference type="PaxDb" id="83332-Rv2300c"/>
<dbReference type="DNASU" id="887880"/>
<dbReference type="GeneID" id="887880"/>
<dbReference type="KEGG" id="mtu:Rv2300c"/>
<dbReference type="KEGG" id="mtv:RVBD_2300c"/>
<dbReference type="PATRIC" id="fig|83332.111.peg.2555"/>
<dbReference type="TubercuList" id="Rv2300c"/>
<dbReference type="eggNOG" id="COG0491">
    <property type="taxonomic scope" value="Bacteria"/>
</dbReference>
<dbReference type="InParanoid" id="P9WLD7"/>
<dbReference type="OrthoDB" id="3196337at2"/>
<dbReference type="PhylomeDB" id="P9WLD7"/>
<dbReference type="Proteomes" id="UP000001584">
    <property type="component" value="Chromosome"/>
</dbReference>
<dbReference type="GO" id="GO:0005886">
    <property type="term" value="C:plasma membrane"/>
    <property type="evidence" value="ECO:0007005"/>
    <property type="project" value="MTBBASE"/>
</dbReference>
<dbReference type="GO" id="GO:0016787">
    <property type="term" value="F:hydrolase activity"/>
    <property type="evidence" value="ECO:0007669"/>
    <property type="project" value="UniProtKB-KW"/>
</dbReference>
<dbReference type="GO" id="GO:0046872">
    <property type="term" value="F:metal ion binding"/>
    <property type="evidence" value="ECO:0007669"/>
    <property type="project" value="UniProtKB-KW"/>
</dbReference>
<dbReference type="CDD" id="cd07742">
    <property type="entry name" value="metallo-hydrolase-like_MBL-fold"/>
    <property type="match status" value="1"/>
</dbReference>
<dbReference type="Gene3D" id="3.60.15.10">
    <property type="entry name" value="Ribonuclease Z/Hydroxyacylglutathione hydrolase-like"/>
    <property type="match status" value="1"/>
</dbReference>
<dbReference type="InterPro" id="IPR051013">
    <property type="entry name" value="MBL_superfamily_lactonases"/>
</dbReference>
<dbReference type="InterPro" id="IPR001279">
    <property type="entry name" value="Metallo-B-lactamas"/>
</dbReference>
<dbReference type="InterPro" id="IPR036866">
    <property type="entry name" value="RibonucZ/Hydroxyglut_hydro"/>
</dbReference>
<dbReference type="PANTHER" id="PTHR42978:SF7">
    <property type="entry name" value="METALLO-HYDROLASE RV2300C-RELATED"/>
    <property type="match status" value="1"/>
</dbReference>
<dbReference type="PANTHER" id="PTHR42978">
    <property type="entry name" value="QUORUM-QUENCHING LACTONASE YTNP-RELATED-RELATED"/>
    <property type="match status" value="1"/>
</dbReference>
<dbReference type="Pfam" id="PF00753">
    <property type="entry name" value="Lactamase_B"/>
    <property type="match status" value="1"/>
</dbReference>
<dbReference type="SMART" id="SM00849">
    <property type="entry name" value="Lactamase_B"/>
    <property type="match status" value="1"/>
</dbReference>
<dbReference type="SUPFAM" id="SSF56281">
    <property type="entry name" value="Metallo-hydrolase/oxidoreductase"/>
    <property type="match status" value="1"/>
</dbReference>
<gene>
    <name type="ordered locus">Rv2300c</name>
    <name type="ORF">MTCY339.09</name>
</gene>
<accession>P9WLD7</accession>
<accession>L0TBW5</accession>
<accession>P64981</accession>
<accession>Q50665</accession>
<protein>
    <recommendedName>
        <fullName>Probable metallo-hydrolase Rv2300c</fullName>
        <ecNumber>3.-.-.-</ecNumber>
    </recommendedName>
</protein>
<proteinExistence type="evidence at protein level"/>